<dbReference type="EC" id="1.10.3.2"/>
<dbReference type="EMBL" id="DP000010">
    <property type="protein sequence ID" value="ABA95017.1"/>
    <property type="molecule type" value="Genomic_DNA"/>
</dbReference>
<dbReference type="EMBL" id="AP008217">
    <property type="protein sequence ID" value="BAF28716.1"/>
    <property type="molecule type" value="Genomic_DNA"/>
</dbReference>
<dbReference type="EMBL" id="AP014967">
    <property type="protein sequence ID" value="BAT15010.1"/>
    <property type="molecule type" value="Genomic_DNA"/>
</dbReference>
<dbReference type="EMBL" id="CM000148">
    <property type="protein sequence ID" value="EAZ19043.1"/>
    <property type="status" value="ALT_SEQ"/>
    <property type="molecule type" value="Genomic_DNA"/>
</dbReference>
<dbReference type="EMBL" id="AK103094">
    <property type="status" value="NOT_ANNOTATED_CDS"/>
    <property type="molecule type" value="mRNA"/>
</dbReference>
<dbReference type="RefSeq" id="XP_015615642.1">
    <property type="nucleotide sequence ID" value="XM_015760156.1"/>
</dbReference>
<dbReference type="SMR" id="Q2R0L2"/>
<dbReference type="STRING" id="39947.Q2R0L2"/>
<dbReference type="GlyCosmos" id="Q2R0L2">
    <property type="glycosylation" value="9 sites, No reported glycans"/>
</dbReference>
<dbReference type="PaxDb" id="39947-Q2R0L2"/>
<dbReference type="EnsemblPlants" id="Os11t0641500-01">
    <property type="protein sequence ID" value="Os11t0641500-01"/>
    <property type="gene ID" value="Os11g0641500"/>
</dbReference>
<dbReference type="Gramene" id="Os11t0641500-01">
    <property type="protein sequence ID" value="Os11t0641500-01"/>
    <property type="gene ID" value="Os11g0641500"/>
</dbReference>
<dbReference type="KEGG" id="dosa:Os11g0641500"/>
<dbReference type="eggNOG" id="KOG1263">
    <property type="taxonomic scope" value="Eukaryota"/>
</dbReference>
<dbReference type="HOGENOM" id="CLU_006504_6_3_1"/>
<dbReference type="InParanoid" id="Q2R0L2"/>
<dbReference type="OMA" id="NVSFHHP"/>
<dbReference type="OrthoDB" id="2121828at2759"/>
<dbReference type="Proteomes" id="UP000000763">
    <property type="component" value="Chromosome 11"/>
</dbReference>
<dbReference type="Proteomes" id="UP000007752">
    <property type="component" value="Chromosome 11"/>
</dbReference>
<dbReference type="Proteomes" id="UP000059680">
    <property type="component" value="Chromosome 11"/>
</dbReference>
<dbReference type="GO" id="GO:0048046">
    <property type="term" value="C:apoplast"/>
    <property type="evidence" value="ECO:0007669"/>
    <property type="project" value="UniProtKB-SubCell"/>
</dbReference>
<dbReference type="GO" id="GO:0005507">
    <property type="term" value="F:copper ion binding"/>
    <property type="evidence" value="ECO:0007669"/>
    <property type="project" value="InterPro"/>
</dbReference>
<dbReference type="GO" id="GO:0052716">
    <property type="term" value="F:hydroquinone:oxygen oxidoreductase activity"/>
    <property type="evidence" value="ECO:0007669"/>
    <property type="project" value="UniProtKB-EC"/>
</dbReference>
<dbReference type="GO" id="GO:0016491">
    <property type="term" value="F:oxidoreductase activity"/>
    <property type="evidence" value="ECO:0000318"/>
    <property type="project" value="GO_Central"/>
</dbReference>
<dbReference type="GO" id="GO:0046274">
    <property type="term" value="P:lignin catabolic process"/>
    <property type="evidence" value="ECO:0007669"/>
    <property type="project" value="UniProtKB-KW"/>
</dbReference>
<dbReference type="CDD" id="cd13849">
    <property type="entry name" value="CuRO_1_LCC_plant"/>
    <property type="match status" value="1"/>
</dbReference>
<dbReference type="CDD" id="cd13875">
    <property type="entry name" value="CuRO_2_LCC_plant"/>
    <property type="match status" value="1"/>
</dbReference>
<dbReference type="CDD" id="cd13897">
    <property type="entry name" value="CuRO_3_LCC_plant"/>
    <property type="match status" value="1"/>
</dbReference>
<dbReference type="Gene3D" id="2.60.40.420">
    <property type="entry name" value="Cupredoxins - blue copper proteins"/>
    <property type="match status" value="3"/>
</dbReference>
<dbReference type="InterPro" id="IPR011707">
    <property type="entry name" value="Cu-oxidase-like_N"/>
</dbReference>
<dbReference type="InterPro" id="IPR001117">
    <property type="entry name" value="Cu-oxidase_2nd"/>
</dbReference>
<dbReference type="InterPro" id="IPR011706">
    <property type="entry name" value="Cu-oxidase_C"/>
</dbReference>
<dbReference type="InterPro" id="IPR045087">
    <property type="entry name" value="Cu-oxidase_fam"/>
</dbReference>
<dbReference type="InterPro" id="IPR033138">
    <property type="entry name" value="Cu_oxidase_CS"/>
</dbReference>
<dbReference type="InterPro" id="IPR002355">
    <property type="entry name" value="Cu_oxidase_Cu_BS"/>
</dbReference>
<dbReference type="InterPro" id="IPR008972">
    <property type="entry name" value="Cupredoxin"/>
</dbReference>
<dbReference type="InterPro" id="IPR034288">
    <property type="entry name" value="CuRO_1_LCC"/>
</dbReference>
<dbReference type="InterPro" id="IPR034285">
    <property type="entry name" value="CuRO_2_LCC"/>
</dbReference>
<dbReference type="InterPro" id="IPR034289">
    <property type="entry name" value="CuRO_3_LCC"/>
</dbReference>
<dbReference type="InterPro" id="IPR017761">
    <property type="entry name" value="Laccase"/>
</dbReference>
<dbReference type="NCBIfam" id="TIGR03389">
    <property type="entry name" value="laccase"/>
    <property type="match status" value="1"/>
</dbReference>
<dbReference type="PANTHER" id="PTHR11709:SF86">
    <property type="entry name" value="LACCASE-18"/>
    <property type="match status" value="1"/>
</dbReference>
<dbReference type="PANTHER" id="PTHR11709">
    <property type="entry name" value="MULTI-COPPER OXIDASE"/>
    <property type="match status" value="1"/>
</dbReference>
<dbReference type="Pfam" id="PF00394">
    <property type="entry name" value="Cu-oxidase"/>
    <property type="match status" value="1"/>
</dbReference>
<dbReference type="Pfam" id="PF07731">
    <property type="entry name" value="Cu-oxidase_2"/>
    <property type="match status" value="1"/>
</dbReference>
<dbReference type="Pfam" id="PF07732">
    <property type="entry name" value="Cu-oxidase_3"/>
    <property type="match status" value="1"/>
</dbReference>
<dbReference type="SUPFAM" id="SSF49503">
    <property type="entry name" value="Cupredoxins"/>
    <property type="match status" value="3"/>
</dbReference>
<dbReference type="PROSITE" id="PS00079">
    <property type="entry name" value="MULTICOPPER_OXIDASE1"/>
    <property type="match status" value="1"/>
</dbReference>
<dbReference type="PROSITE" id="PS00080">
    <property type="entry name" value="MULTICOPPER_OXIDASE2"/>
    <property type="match status" value="1"/>
</dbReference>
<name>LAC19_ORYSJ</name>
<organism>
    <name type="scientific">Oryza sativa subsp. japonica</name>
    <name type="common">Rice</name>
    <dbReference type="NCBI Taxonomy" id="39947"/>
    <lineage>
        <taxon>Eukaryota</taxon>
        <taxon>Viridiplantae</taxon>
        <taxon>Streptophyta</taxon>
        <taxon>Embryophyta</taxon>
        <taxon>Tracheophyta</taxon>
        <taxon>Spermatophyta</taxon>
        <taxon>Magnoliopsida</taxon>
        <taxon>Liliopsida</taxon>
        <taxon>Poales</taxon>
        <taxon>Poaceae</taxon>
        <taxon>BOP clade</taxon>
        <taxon>Oryzoideae</taxon>
        <taxon>Oryzeae</taxon>
        <taxon>Oryzinae</taxon>
        <taxon>Oryza</taxon>
        <taxon>Oryza sativa</taxon>
    </lineage>
</organism>
<proteinExistence type="evidence at transcript level"/>
<protein>
    <recommendedName>
        <fullName>Laccase-19</fullName>
        <ecNumber>1.10.3.2</ecNumber>
    </recommendedName>
    <alternativeName>
        <fullName>Benzenediol:oxygen oxidoreductase 19</fullName>
    </alternativeName>
    <alternativeName>
        <fullName>Diphenol oxidase 19</fullName>
    </alternativeName>
    <alternativeName>
        <fullName>Urishiol oxidase 19</fullName>
    </alternativeName>
</protein>
<feature type="signal peptide" evidence="2">
    <location>
        <begin position="1"/>
        <end position="28"/>
    </location>
</feature>
<feature type="chain" id="PRO_0000291905" description="Laccase-19">
    <location>
        <begin position="29"/>
        <end position="590"/>
    </location>
</feature>
<feature type="domain" description="Plastocyanin-like 1">
    <location>
        <begin position="36"/>
        <end position="152"/>
    </location>
</feature>
<feature type="domain" description="Plastocyanin-like 2">
    <location>
        <begin position="161"/>
        <end position="315"/>
    </location>
</feature>
<feature type="domain" description="Plastocyanin-like 3">
    <location>
        <begin position="424"/>
        <end position="566"/>
    </location>
</feature>
<feature type="region of interest" description="Disordered" evidence="3">
    <location>
        <begin position="565"/>
        <end position="590"/>
    </location>
</feature>
<feature type="binding site" evidence="1">
    <location>
        <position position="86"/>
    </location>
    <ligand>
        <name>Cu cation</name>
        <dbReference type="ChEBI" id="CHEBI:23378"/>
        <label>1</label>
    </ligand>
</feature>
<feature type="binding site" evidence="1">
    <location>
        <position position="88"/>
    </location>
    <ligand>
        <name>Cu cation</name>
        <dbReference type="ChEBI" id="CHEBI:23378"/>
        <label>2</label>
    </ligand>
</feature>
<feature type="binding site" evidence="1">
    <location>
        <position position="131"/>
    </location>
    <ligand>
        <name>Cu cation</name>
        <dbReference type="ChEBI" id="CHEBI:23378"/>
        <label>2</label>
    </ligand>
</feature>
<feature type="binding site" evidence="1">
    <location>
        <position position="133"/>
    </location>
    <ligand>
        <name>Cu cation</name>
        <dbReference type="ChEBI" id="CHEBI:23378"/>
        <label>3</label>
    </ligand>
</feature>
<feature type="binding site" evidence="2">
    <location>
        <position position="483"/>
    </location>
    <ligand>
        <name>Cu cation</name>
        <dbReference type="ChEBI" id="CHEBI:23378"/>
        <label>4</label>
    </ligand>
</feature>
<feature type="binding site" evidence="1">
    <location>
        <position position="486"/>
    </location>
    <ligand>
        <name>Cu cation</name>
        <dbReference type="ChEBI" id="CHEBI:23378"/>
        <label>1</label>
    </ligand>
</feature>
<feature type="binding site" evidence="1">
    <location>
        <position position="488"/>
    </location>
    <ligand>
        <name>Cu cation</name>
        <dbReference type="ChEBI" id="CHEBI:23378"/>
        <label>3</label>
    </ligand>
</feature>
<feature type="binding site" evidence="1">
    <location>
        <position position="545"/>
    </location>
    <ligand>
        <name>Cu cation</name>
        <dbReference type="ChEBI" id="CHEBI:23378"/>
        <label>3</label>
    </ligand>
</feature>
<feature type="binding site" evidence="2">
    <location>
        <position position="546"/>
    </location>
    <ligand>
        <name>Cu cation</name>
        <dbReference type="ChEBI" id="CHEBI:23378"/>
        <label>4</label>
    </ligand>
</feature>
<feature type="binding site" evidence="1">
    <location>
        <position position="547"/>
    </location>
    <ligand>
        <name>Cu cation</name>
        <dbReference type="ChEBI" id="CHEBI:23378"/>
        <label>2</label>
    </ligand>
</feature>
<feature type="binding site" evidence="2">
    <location>
        <position position="551"/>
    </location>
    <ligand>
        <name>Cu cation</name>
        <dbReference type="ChEBI" id="CHEBI:23378"/>
        <label>4</label>
    </ligand>
</feature>
<feature type="binding site" evidence="2">
    <location>
        <position position="556"/>
    </location>
    <ligand>
        <name>Cu cation</name>
        <dbReference type="ChEBI" id="CHEBI:23378"/>
        <label>4</label>
    </ligand>
</feature>
<feature type="glycosylation site" description="N-linked (GlcNAc...) asparagine" evidence="2">
    <location>
        <position position="41"/>
    </location>
</feature>
<feature type="glycosylation site" description="N-linked (GlcNAc...) asparagine" evidence="2">
    <location>
        <position position="47"/>
    </location>
</feature>
<feature type="glycosylation site" description="N-linked (GlcNAc...) asparagine" evidence="2">
    <location>
        <position position="120"/>
    </location>
</feature>
<feature type="glycosylation site" description="N-linked (GlcNAc...) asparagine" evidence="2">
    <location>
        <position position="205"/>
    </location>
</feature>
<feature type="glycosylation site" description="N-linked (GlcNAc...) asparagine" evidence="2">
    <location>
        <position position="344"/>
    </location>
</feature>
<feature type="glycosylation site" description="N-linked (GlcNAc...) asparagine" evidence="2">
    <location>
        <position position="378"/>
    </location>
</feature>
<feature type="glycosylation site" description="N-linked (GlcNAc...) asparagine" evidence="2">
    <location>
        <position position="397"/>
    </location>
</feature>
<feature type="glycosylation site" description="N-linked (GlcNAc...) asparagine" evidence="2">
    <location>
        <position position="434"/>
    </location>
</feature>
<feature type="glycosylation site" description="N-linked (GlcNAc...) asparagine" evidence="2">
    <location>
        <position position="465"/>
    </location>
</feature>
<feature type="sequence conflict" description="In Ref. 5; EAZ19043." evidence="4" ref="5">
    <original>N</original>
    <variation>K</variation>
    <location>
        <position position="501"/>
    </location>
</feature>
<sequence>MEKLSMVTSLLCAITVAVLAVAVVSGEAAVVEHTFVVHEMNATHLCNTTKIYVVNGQFPGPTVDVTEGDTVVVHVINKLPFGLTIHWHGVRQMRSCWADGAGFVTECPIPPGNEHTYRFNVTGQVGTLWWHAHVTCLRATINGAFIVRPRDGKYPFPTPAKDVPIIIGEWWELDLIELDRRMMDGNFDDNPLSATINGKLGDLSNCSRMVEESFILDVKHGESYLLRVINTALFSEYYFRVAGHTFTVVGADGNYLTPFKTDMVTVAPGEAIDVIMVADAPPAHYHMIALANQPPEPDPQIPVFTSRGLVRYAGTTANNNGLPVPMPIMPNQHNTMPSYYFHANLTGLAHPERHRVPMHVDERLFVTLGLGSICRGQNTTCKRRRSPETIVVATMNNVSFAHPKTTALLERYYDGTSKGVYTEDFPIRPPRPFNYTNRDLIPPGPLEEALEPTFKATKLKRFKYNTSVEIIFQSTTLMQSDSNPMHLHGYDVFLLAQGLGNFNAKRDVRKFNYHNPQLRNTVQVPRGGWAAIRFVTDNPGMWYLHCHFEFHIIMGMATAFIVEDGPTPETSLPPPPPEFKRCGNNGLSQP</sequence>
<keyword id="KW-0052">Apoplast</keyword>
<keyword id="KW-0186">Copper</keyword>
<keyword id="KW-0325">Glycoprotein</keyword>
<keyword id="KW-0439">Lignin degradation</keyword>
<keyword id="KW-0479">Metal-binding</keyword>
<keyword id="KW-0560">Oxidoreductase</keyword>
<keyword id="KW-1185">Reference proteome</keyword>
<keyword id="KW-0677">Repeat</keyword>
<keyword id="KW-0964">Secreted</keyword>
<keyword id="KW-0732">Signal</keyword>
<gene>
    <name type="primary">LAC19</name>
    <name type="ordered locus">Os11g0641500</name>
    <name type="ordered locus">LOC_Os11g42200</name>
    <name type="ORF">OsJ_033252</name>
</gene>
<evidence type="ECO:0000250" key="1"/>
<evidence type="ECO:0000255" key="2"/>
<evidence type="ECO:0000256" key="3">
    <source>
        <dbReference type="SAM" id="MobiDB-lite"/>
    </source>
</evidence>
<evidence type="ECO:0000305" key="4"/>
<accession>Q2R0L2</accession>
<accession>A0A0N7KT97</accession>
<accession>A3CD80</accession>
<comment type="function">
    <text evidence="1">Lignin degradation and detoxification of lignin-derived products.</text>
</comment>
<comment type="catalytic activity">
    <reaction>
        <text>4 hydroquinone + O2 = 4 benzosemiquinone + 2 H2O</text>
        <dbReference type="Rhea" id="RHEA:11276"/>
        <dbReference type="ChEBI" id="CHEBI:15377"/>
        <dbReference type="ChEBI" id="CHEBI:15379"/>
        <dbReference type="ChEBI" id="CHEBI:17594"/>
        <dbReference type="ChEBI" id="CHEBI:17977"/>
        <dbReference type="EC" id="1.10.3.2"/>
    </reaction>
</comment>
<comment type="cofactor">
    <cofactor evidence="1">
        <name>Cu cation</name>
        <dbReference type="ChEBI" id="CHEBI:23378"/>
    </cofactor>
    <text evidence="1">Binds 4 Cu cations per monomer.</text>
</comment>
<comment type="subcellular location">
    <subcellularLocation>
        <location evidence="4">Secreted</location>
        <location evidence="4">Extracellular space</location>
        <location evidence="4">Apoplast</location>
    </subcellularLocation>
</comment>
<comment type="similarity">
    <text evidence="4">Belongs to the multicopper oxidase family.</text>
</comment>
<comment type="sequence caution" evidence="4">
    <conflict type="frameshift">
        <sequence resource="EMBL" id="AK103094"/>
    </conflict>
</comment>
<comment type="sequence caution" evidence="4">
    <conflict type="erroneous gene model prediction">
        <sequence resource="EMBL-CDS" id="EAZ19043"/>
    </conflict>
</comment>
<reference key="1">
    <citation type="journal article" date="2005" name="BMC Biol.">
        <title>The sequence of rice chromosomes 11 and 12, rich in disease resistance genes and recent gene duplications.</title>
        <authorList>
            <consortium name="The rice chromosomes 11 and 12 sequencing consortia"/>
        </authorList>
    </citation>
    <scope>NUCLEOTIDE SEQUENCE [LARGE SCALE GENOMIC DNA]</scope>
    <source>
        <strain>cv. Nipponbare</strain>
    </source>
</reference>
<reference key="2">
    <citation type="journal article" date="2005" name="Nature">
        <title>The map-based sequence of the rice genome.</title>
        <authorList>
            <consortium name="International rice genome sequencing project (IRGSP)"/>
        </authorList>
    </citation>
    <scope>NUCLEOTIDE SEQUENCE [LARGE SCALE GENOMIC DNA]</scope>
    <source>
        <strain>cv. Nipponbare</strain>
    </source>
</reference>
<reference key="3">
    <citation type="journal article" date="2008" name="Nucleic Acids Res.">
        <title>The rice annotation project database (RAP-DB): 2008 update.</title>
        <authorList>
            <consortium name="The rice annotation project (RAP)"/>
        </authorList>
    </citation>
    <scope>GENOME REANNOTATION</scope>
    <source>
        <strain>cv. Nipponbare</strain>
    </source>
</reference>
<reference key="4">
    <citation type="journal article" date="2013" name="Rice">
        <title>Improvement of the Oryza sativa Nipponbare reference genome using next generation sequence and optical map data.</title>
        <authorList>
            <person name="Kawahara Y."/>
            <person name="de la Bastide M."/>
            <person name="Hamilton J.P."/>
            <person name="Kanamori H."/>
            <person name="McCombie W.R."/>
            <person name="Ouyang S."/>
            <person name="Schwartz D.C."/>
            <person name="Tanaka T."/>
            <person name="Wu J."/>
            <person name="Zhou S."/>
            <person name="Childs K.L."/>
            <person name="Davidson R.M."/>
            <person name="Lin H."/>
            <person name="Quesada-Ocampo L."/>
            <person name="Vaillancourt B."/>
            <person name="Sakai H."/>
            <person name="Lee S.S."/>
            <person name="Kim J."/>
            <person name="Numa H."/>
            <person name="Itoh T."/>
            <person name="Buell C.R."/>
            <person name="Matsumoto T."/>
        </authorList>
    </citation>
    <scope>GENOME REANNOTATION</scope>
    <source>
        <strain>cv. Nipponbare</strain>
    </source>
</reference>
<reference key="5">
    <citation type="journal article" date="2005" name="PLoS Biol.">
        <title>The genomes of Oryza sativa: a history of duplications.</title>
        <authorList>
            <person name="Yu J."/>
            <person name="Wang J."/>
            <person name="Lin W."/>
            <person name="Li S."/>
            <person name="Li H."/>
            <person name="Zhou J."/>
            <person name="Ni P."/>
            <person name="Dong W."/>
            <person name="Hu S."/>
            <person name="Zeng C."/>
            <person name="Zhang J."/>
            <person name="Zhang Y."/>
            <person name="Li R."/>
            <person name="Xu Z."/>
            <person name="Li S."/>
            <person name="Li X."/>
            <person name="Zheng H."/>
            <person name="Cong L."/>
            <person name="Lin L."/>
            <person name="Yin J."/>
            <person name="Geng J."/>
            <person name="Li G."/>
            <person name="Shi J."/>
            <person name="Liu J."/>
            <person name="Lv H."/>
            <person name="Li J."/>
            <person name="Wang J."/>
            <person name="Deng Y."/>
            <person name="Ran L."/>
            <person name="Shi X."/>
            <person name="Wang X."/>
            <person name="Wu Q."/>
            <person name="Li C."/>
            <person name="Ren X."/>
            <person name="Wang J."/>
            <person name="Wang X."/>
            <person name="Li D."/>
            <person name="Liu D."/>
            <person name="Zhang X."/>
            <person name="Ji Z."/>
            <person name="Zhao W."/>
            <person name="Sun Y."/>
            <person name="Zhang Z."/>
            <person name="Bao J."/>
            <person name="Han Y."/>
            <person name="Dong L."/>
            <person name="Ji J."/>
            <person name="Chen P."/>
            <person name="Wu S."/>
            <person name="Liu J."/>
            <person name="Xiao Y."/>
            <person name="Bu D."/>
            <person name="Tan J."/>
            <person name="Yang L."/>
            <person name="Ye C."/>
            <person name="Zhang J."/>
            <person name="Xu J."/>
            <person name="Zhou Y."/>
            <person name="Yu Y."/>
            <person name="Zhang B."/>
            <person name="Zhuang S."/>
            <person name="Wei H."/>
            <person name="Liu B."/>
            <person name="Lei M."/>
            <person name="Yu H."/>
            <person name="Li Y."/>
            <person name="Xu H."/>
            <person name="Wei S."/>
            <person name="He X."/>
            <person name="Fang L."/>
            <person name="Zhang Z."/>
            <person name="Zhang Y."/>
            <person name="Huang X."/>
            <person name="Su Z."/>
            <person name="Tong W."/>
            <person name="Li J."/>
            <person name="Tong Z."/>
            <person name="Li S."/>
            <person name="Ye J."/>
            <person name="Wang L."/>
            <person name="Fang L."/>
            <person name="Lei T."/>
            <person name="Chen C.-S."/>
            <person name="Chen H.-C."/>
            <person name="Xu Z."/>
            <person name="Li H."/>
            <person name="Huang H."/>
            <person name="Zhang F."/>
            <person name="Xu H."/>
            <person name="Li N."/>
            <person name="Zhao C."/>
            <person name="Li S."/>
            <person name="Dong L."/>
            <person name="Huang Y."/>
            <person name="Li L."/>
            <person name="Xi Y."/>
            <person name="Qi Q."/>
            <person name="Li W."/>
            <person name="Zhang B."/>
            <person name="Hu W."/>
            <person name="Zhang Y."/>
            <person name="Tian X."/>
            <person name="Jiao Y."/>
            <person name="Liang X."/>
            <person name="Jin J."/>
            <person name="Gao L."/>
            <person name="Zheng W."/>
            <person name="Hao B."/>
            <person name="Liu S.-M."/>
            <person name="Wang W."/>
            <person name="Yuan L."/>
            <person name="Cao M."/>
            <person name="McDermott J."/>
            <person name="Samudrala R."/>
            <person name="Wang J."/>
            <person name="Wong G.K.-S."/>
            <person name="Yang H."/>
        </authorList>
    </citation>
    <scope>NUCLEOTIDE SEQUENCE [LARGE SCALE GENOMIC DNA]</scope>
    <source>
        <strain>cv. Nipponbare</strain>
    </source>
</reference>
<reference key="6">
    <citation type="journal article" date="2003" name="Science">
        <title>Collection, mapping, and annotation of over 28,000 cDNA clones from japonica rice.</title>
        <authorList>
            <consortium name="The rice full-length cDNA consortium"/>
        </authorList>
    </citation>
    <scope>NUCLEOTIDE SEQUENCE [LARGE SCALE MRNA]</scope>
    <source>
        <strain>cv. Nipponbare</strain>
    </source>
</reference>